<keyword id="KW-0378">Hydrolase</keyword>
<keyword id="KW-0546">Nucleotide metabolism</keyword>
<keyword id="KW-0547">Nucleotide-binding</keyword>
<protein>
    <recommendedName>
        <fullName evidence="1">dCTP deaminase</fullName>
        <ecNumber evidence="1">3.5.4.13</ecNumber>
    </recommendedName>
    <alternativeName>
        <fullName evidence="1">Deoxycytidine triphosphate deaminase</fullName>
    </alternativeName>
</protein>
<proteinExistence type="inferred from homology"/>
<dbReference type="EC" id="3.5.4.13" evidence="1"/>
<dbReference type="EMBL" id="AE017196">
    <property type="protein sequence ID" value="AAS14105.1"/>
    <property type="molecule type" value="Genomic_DNA"/>
</dbReference>
<dbReference type="RefSeq" id="WP_006280485.1">
    <property type="nucleotide sequence ID" value="NZ_OX384529.1"/>
</dbReference>
<dbReference type="SMR" id="Q73I07"/>
<dbReference type="EnsemblBacteria" id="AAS14105">
    <property type="protein sequence ID" value="AAS14105"/>
    <property type="gene ID" value="WD_0379"/>
</dbReference>
<dbReference type="GeneID" id="70035873"/>
<dbReference type="KEGG" id="wol:WD_0379"/>
<dbReference type="eggNOG" id="COG0717">
    <property type="taxonomic scope" value="Bacteria"/>
</dbReference>
<dbReference type="UniPathway" id="UPA00610">
    <property type="reaction ID" value="UER00665"/>
</dbReference>
<dbReference type="Proteomes" id="UP000008215">
    <property type="component" value="Chromosome"/>
</dbReference>
<dbReference type="GO" id="GO:0008829">
    <property type="term" value="F:dCTP deaminase activity"/>
    <property type="evidence" value="ECO:0007669"/>
    <property type="project" value="UniProtKB-UniRule"/>
</dbReference>
<dbReference type="GO" id="GO:0000166">
    <property type="term" value="F:nucleotide binding"/>
    <property type="evidence" value="ECO:0007669"/>
    <property type="project" value="UniProtKB-KW"/>
</dbReference>
<dbReference type="GO" id="GO:0006226">
    <property type="term" value="P:dUMP biosynthetic process"/>
    <property type="evidence" value="ECO:0007669"/>
    <property type="project" value="UniProtKB-UniPathway"/>
</dbReference>
<dbReference type="GO" id="GO:0006229">
    <property type="term" value="P:dUTP biosynthetic process"/>
    <property type="evidence" value="ECO:0007669"/>
    <property type="project" value="UniProtKB-UniRule"/>
</dbReference>
<dbReference type="CDD" id="cd07557">
    <property type="entry name" value="trimeric_dUTPase"/>
    <property type="match status" value="1"/>
</dbReference>
<dbReference type="FunFam" id="2.70.40.10:FF:000001">
    <property type="entry name" value="dCTP deaminase"/>
    <property type="match status" value="1"/>
</dbReference>
<dbReference type="Gene3D" id="2.70.40.10">
    <property type="match status" value="1"/>
</dbReference>
<dbReference type="HAMAP" id="MF_00146">
    <property type="entry name" value="dCTP_deaminase"/>
    <property type="match status" value="1"/>
</dbReference>
<dbReference type="InterPro" id="IPR011962">
    <property type="entry name" value="dCTP_deaminase"/>
</dbReference>
<dbReference type="InterPro" id="IPR036157">
    <property type="entry name" value="dUTPase-like_sf"/>
</dbReference>
<dbReference type="InterPro" id="IPR033704">
    <property type="entry name" value="dUTPase_trimeric"/>
</dbReference>
<dbReference type="NCBIfam" id="TIGR02274">
    <property type="entry name" value="dCTP_deam"/>
    <property type="match status" value="1"/>
</dbReference>
<dbReference type="PANTHER" id="PTHR42680">
    <property type="entry name" value="DCTP DEAMINASE"/>
    <property type="match status" value="1"/>
</dbReference>
<dbReference type="PANTHER" id="PTHR42680:SF3">
    <property type="entry name" value="DCTP DEAMINASE"/>
    <property type="match status" value="1"/>
</dbReference>
<dbReference type="Pfam" id="PF22769">
    <property type="entry name" value="DCD"/>
    <property type="match status" value="1"/>
</dbReference>
<dbReference type="SUPFAM" id="SSF51283">
    <property type="entry name" value="dUTPase-like"/>
    <property type="match status" value="1"/>
</dbReference>
<evidence type="ECO:0000255" key="1">
    <source>
        <dbReference type="HAMAP-Rule" id="MF_00146"/>
    </source>
</evidence>
<name>DCD_WOLPM</name>
<feature type="chain" id="PRO_1000009827" description="dCTP deaminase">
    <location>
        <begin position="1"/>
        <end position="185"/>
    </location>
</feature>
<feature type="active site" description="Proton donor/acceptor" evidence="1">
    <location>
        <position position="133"/>
    </location>
</feature>
<feature type="binding site" evidence="1">
    <location>
        <begin position="107"/>
        <end position="112"/>
    </location>
    <ligand>
        <name>dCTP</name>
        <dbReference type="ChEBI" id="CHEBI:61481"/>
    </ligand>
</feature>
<feature type="binding site" evidence="1">
    <location>
        <begin position="131"/>
        <end position="133"/>
    </location>
    <ligand>
        <name>dCTP</name>
        <dbReference type="ChEBI" id="CHEBI:61481"/>
    </ligand>
</feature>
<feature type="binding site" evidence="1">
    <location>
        <position position="152"/>
    </location>
    <ligand>
        <name>dCTP</name>
        <dbReference type="ChEBI" id="CHEBI:61481"/>
    </ligand>
</feature>
<feature type="binding site" evidence="1">
    <location>
        <position position="166"/>
    </location>
    <ligand>
        <name>dCTP</name>
        <dbReference type="ChEBI" id="CHEBI:61481"/>
    </ligand>
</feature>
<feature type="binding site" evidence="1">
    <location>
        <position position="176"/>
    </location>
    <ligand>
        <name>dCTP</name>
        <dbReference type="ChEBI" id="CHEBI:61481"/>
    </ligand>
</feature>
<comment type="function">
    <text evidence="1">Catalyzes the deamination of dCTP to dUTP.</text>
</comment>
<comment type="catalytic activity">
    <reaction evidence="1">
        <text>dCTP + H2O + H(+) = dUTP + NH4(+)</text>
        <dbReference type="Rhea" id="RHEA:22680"/>
        <dbReference type="ChEBI" id="CHEBI:15377"/>
        <dbReference type="ChEBI" id="CHEBI:15378"/>
        <dbReference type="ChEBI" id="CHEBI:28938"/>
        <dbReference type="ChEBI" id="CHEBI:61481"/>
        <dbReference type="ChEBI" id="CHEBI:61555"/>
        <dbReference type="EC" id="3.5.4.13"/>
    </reaction>
</comment>
<comment type="pathway">
    <text evidence="1">Pyrimidine metabolism; dUMP biosynthesis; dUMP from dCTP (dUTP route): step 1/2.</text>
</comment>
<comment type="subunit">
    <text evidence="1">Homotrimer.</text>
</comment>
<comment type="similarity">
    <text evidence="1">Belongs to the dCTP deaminase family.</text>
</comment>
<reference key="1">
    <citation type="journal article" date="2004" name="PLoS Biol.">
        <title>Phylogenomics of the reproductive parasite Wolbachia pipientis wMel: a streamlined genome overrun by mobile genetic elements.</title>
        <authorList>
            <person name="Wu M."/>
            <person name="Sun L.V."/>
            <person name="Vamathevan J.J."/>
            <person name="Riegler M."/>
            <person name="DeBoy R.T."/>
            <person name="Brownlie J.C."/>
            <person name="McGraw E.A."/>
            <person name="Martin W."/>
            <person name="Esser C."/>
            <person name="Ahmadinejad N."/>
            <person name="Wiegand C."/>
            <person name="Madupu R."/>
            <person name="Beanan M.J."/>
            <person name="Brinkac L.M."/>
            <person name="Daugherty S.C."/>
            <person name="Durkin A.S."/>
            <person name="Kolonay J.F."/>
            <person name="Nelson W.C."/>
            <person name="Mohamoud Y."/>
            <person name="Lee P."/>
            <person name="Berry K.J."/>
            <person name="Young M.B."/>
            <person name="Utterback T.R."/>
            <person name="Weidman J.F."/>
            <person name="Nierman W.C."/>
            <person name="Paulsen I.T."/>
            <person name="Nelson K.E."/>
            <person name="Tettelin H."/>
            <person name="O'Neill S.L."/>
            <person name="Eisen J.A."/>
        </authorList>
    </citation>
    <scope>NUCLEOTIDE SEQUENCE [LARGE SCALE GENOMIC DNA]</scope>
</reference>
<organism>
    <name type="scientific">Wolbachia pipientis wMel</name>
    <dbReference type="NCBI Taxonomy" id="163164"/>
    <lineage>
        <taxon>Bacteria</taxon>
        <taxon>Pseudomonadati</taxon>
        <taxon>Pseudomonadota</taxon>
        <taxon>Alphaproteobacteria</taxon>
        <taxon>Rickettsiales</taxon>
        <taxon>Anaplasmataceae</taxon>
        <taxon>Wolbachieae</taxon>
        <taxon>Wolbachia</taxon>
    </lineage>
</organism>
<sequence>MAVMPDKWIREKAENFGMIEPFVNHKSSKGVISFGLSSYGYDARVDNKFKIFTNVNSAIVDPKNFSENSFIDKETDVCIIPPNSFVLASTVEYFRIPRNVLVICVGKSTYARCGIIVNVTPLEPGWEGHVTLEFSNTTPLPAKIYANEGACQFVFLSGESECEKSYDDMKGKYMNQHGITLPLVK</sequence>
<gene>
    <name evidence="1" type="primary">dcd</name>
    <name type="ordered locus">WD_0379</name>
</gene>
<accession>Q73I07</accession>